<protein>
    <recommendedName>
        <fullName evidence="5">Delta-actitoxin-Avd2c</fullName>
        <shortName evidence="5">Delta-AITX-Avd2c</shortName>
    </recommendedName>
    <alternativeName>
        <fullName evidence="4">Av10</fullName>
    </alternativeName>
    <alternativeName>
        <fullName evidence="7">Neurotoxin 10</fullName>
    </alternativeName>
</protein>
<dbReference type="EMBL" id="EU919730">
    <property type="protein sequence ID" value="ACL12305.1"/>
    <property type="molecule type" value="Genomic_DNA"/>
</dbReference>
<dbReference type="SMR" id="C3TS07"/>
<dbReference type="TCDB" id="8.B.17.1.7">
    <property type="family name" value="the sea anemone peptide toxin class iii (shi) family"/>
</dbReference>
<dbReference type="GO" id="GO:0005576">
    <property type="term" value="C:extracellular region"/>
    <property type="evidence" value="ECO:0007669"/>
    <property type="project" value="UniProtKB-SubCell"/>
</dbReference>
<dbReference type="GO" id="GO:0042151">
    <property type="term" value="C:nematocyst"/>
    <property type="evidence" value="ECO:0007669"/>
    <property type="project" value="UniProtKB-SubCell"/>
</dbReference>
<dbReference type="GO" id="GO:0019871">
    <property type="term" value="F:sodium channel inhibitor activity"/>
    <property type="evidence" value="ECO:0007669"/>
    <property type="project" value="InterPro"/>
</dbReference>
<dbReference type="GO" id="GO:0090729">
    <property type="term" value="F:toxin activity"/>
    <property type="evidence" value="ECO:0007669"/>
    <property type="project" value="UniProtKB-KW"/>
</dbReference>
<dbReference type="InterPro" id="IPR012509">
    <property type="entry name" value="Neurotoxin_3_Anemonia"/>
</dbReference>
<dbReference type="InterPro" id="IPR036247">
    <property type="entry name" value="Neurotoxin_3_sf"/>
</dbReference>
<dbReference type="Pfam" id="PF08098">
    <property type="entry name" value="ATX_III"/>
    <property type="match status" value="1"/>
</dbReference>
<dbReference type="SUPFAM" id="SSF57419">
    <property type="entry name" value="Neurotoxin III (ATX III)"/>
    <property type="match status" value="1"/>
</dbReference>
<sequence length="61" mass="6626">MMNRLLVFLMLGAFMLVVSANDAYGGDESLGKRKSCCPCWLGGNCFWGQNCYPQGCSGPKV</sequence>
<accession>C3TS07</accession>
<feature type="signal peptide" evidence="2">
    <location>
        <begin position="1"/>
        <end position="20"/>
    </location>
</feature>
<feature type="propeptide" id="PRO_0000433699" evidence="1">
    <location>
        <begin position="21"/>
        <end position="31"/>
    </location>
</feature>
<feature type="peptide" id="PRO_0000433700" description="Delta-actitoxin-Avd2c">
    <location>
        <begin position="34"/>
        <end position="61"/>
    </location>
</feature>
<feature type="disulfide bond" evidence="1">
    <location>
        <begin position="36"/>
        <end position="51"/>
    </location>
</feature>
<feature type="disulfide bond" evidence="1">
    <location>
        <begin position="37"/>
        <end position="45"/>
    </location>
</feature>
<feature type="disulfide bond" evidence="1">
    <location>
        <begin position="39"/>
        <end position="56"/>
    </location>
</feature>
<keyword id="KW-1015">Disulfide bond</keyword>
<keyword id="KW-0166">Nematocyst</keyword>
<keyword id="KW-0528">Neurotoxin</keyword>
<keyword id="KW-0964">Secreted</keyword>
<keyword id="KW-0732">Signal</keyword>
<keyword id="KW-0800">Toxin</keyword>
<organism>
    <name type="scientific">Anemonia viridis</name>
    <name type="common">Snakelocks anemone</name>
    <dbReference type="NCBI Taxonomy" id="51769"/>
    <lineage>
        <taxon>Eukaryota</taxon>
        <taxon>Metazoa</taxon>
        <taxon>Cnidaria</taxon>
        <taxon>Anthozoa</taxon>
        <taxon>Hexacorallia</taxon>
        <taxon>Actiniaria</taxon>
        <taxon>Actiniidae</taxon>
        <taxon>Anemonia</taxon>
    </lineage>
</organism>
<name>STXA_ANEVI</name>
<proteinExistence type="inferred from homology"/>
<reference key="1">
    <citation type="journal article" date="2009" name="J. Mol. Evol.">
        <title>Fusion and retrotransposition events in the evolution of the sea anemone Anemonia viridis neurotoxin genes.</title>
        <authorList>
            <person name="Moran Y."/>
            <person name="Weinberger H."/>
            <person name="Lazarus N."/>
            <person name="Gur M."/>
            <person name="Kahn R."/>
            <person name="Gordon D."/>
            <person name="Gurevitz M."/>
        </authorList>
    </citation>
    <scope>NUCLEOTIDE SEQUENCE [GENOMIC DNA]</scope>
    <scope>FUNCTION</scope>
    <source>
        <tissue>Ovary</tissue>
    </source>
</reference>
<reference key="2">
    <citation type="journal article" date="2012" name="Toxicon">
        <title>Development of a rational nomenclature for naming peptide and protein toxins from sea anemones.</title>
        <authorList>
            <person name="Oliveira J.S."/>
            <person name="Fuentes-Silva D."/>
            <person name="King G.F."/>
        </authorList>
    </citation>
    <scope>NOMENCLATURE</scope>
</reference>
<comment type="function">
    <text evidence="3">Sodium channel inhibitor. 5 uM completely inhibits voltage-gated sodium channel (Nav) inactivation.</text>
</comment>
<comment type="subcellular location">
    <subcellularLocation>
        <location evidence="6">Secreted</location>
    </subcellularLocation>
    <subcellularLocation>
        <location evidence="6">Nematocyst</location>
    </subcellularLocation>
</comment>
<comment type="similarity">
    <text evidence="6">Belongs to the sea anemone short toxin (type III) family.</text>
</comment>
<comment type="caution">
    <text evidence="6">Opinions are divided on whether Anemonia viridis (Forsskal, 1775) and Anemonia sulcata (Pennant, 1777) are separate species.</text>
</comment>
<evidence type="ECO:0000250" key="1">
    <source>
        <dbReference type="UniProtKB" id="P01535"/>
    </source>
</evidence>
<evidence type="ECO:0000255" key="2"/>
<evidence type="ECO:0000269" key="3">
    <source>
    </source>
</evidence>
<evidence type="ECO:0000303" key="4">
    <source>
    </source>
</evidence>
<evidence type="ECO:0000303" key="5">
    <source>
    </source>
</evidence>
<evidence type="ECO:0000305" key="6"/>
<evidence type="ECO:0000312" key="7">
    <source>
        <dbReference type="EMBL" id="ACL12305.1"/>
    </source>
</evidence>